<organism>
    <name type="scientific">Drosophila melanogaster</name>
    <name type="common">Fruit fly</name>
    <dbReference type="NCBI Taxonomy" id="7227"/>
    <lineage>
        <taxon>Eukaryota</taxon>
        <taxon>Metazoa</taxon>
        <taxon>Ecdysozoa</taxon>
        <taxon>Arthropoda</taxon>
        <taxon>Hexapoda</taxon>
        <taxon>Insecta</taxon>
        <taxon>Pterygota</taxon>
        <taxon>Neoptera</taxon>
        <taxon>Endopterygota</taxon>
        <taxon>Diptera</taxon>
        <taxon>Brachycera</taxon>
        <taxon>Muscomorpha</taxon>
        <taxon>Ephydroidea</taxon>
        <taxon>Drosophilidae</taxon>
        <taxon>Drosophila</taxon>
        <taxon>Sophophora</taxon>
    </lineage>
</organism>
<protein>
    <recommendedName>
        <fullName>Actin-related protein 3</fullName>
    </recommendedName>
    <alternativeName>
        <fullName>Actin-2</fullName>
    </alternativeName>
    <alternativeName>
        <fullName>Actin-like protein 3</fullName>
    </alternativeName>
    <alternativeName>
        <fullName>Actin-like protein 66B</fullName>
    </alternativeName>
</protein>
<dbReference type="EMBL" id="X71789">
    <property type="protein sequence ID" value="CAA50674.1"/>
    <property type="molecule type" value="Genomic_DNA"/>
</dbReference>
<dbReference type="EMBL" id="AE014296">
    <property type="protein sequence ID" value="AAF50488.1"/>
    <property type="molecule type" value="Genomic_DNA"/>
</dbReference>
<dbReference type="EMBL" id="AE014296">
    <property type="protein sequence ID" value="AGB94254.1"/>
    <property type="molecule type" value="Genomic_DNA"/>
</dbReference>
<dbReference type="EMBL" id="AY051859">
    <property type="protein sequence ID" value="AAK93283.1"/>
    <property type="molecule type" value="mRNA"/>
</dbReference>
<dbReference type="RefSeq" id="NP_001261559.1">
    <property type="nucleotide sequence ID" value="NM_001274630.1"/>
</dbReference>
<dbReference type="RefSeq" id="NP_523968.1">
    <property type="nucleotide sequence ID" value="NM_079244.3"/>
</dbReference>
<dbReference type="SMR" id="P32392"/>
<dbReference type="BioGRID" id="64322">
    <property type="interactions" value="28"/>
</dbReference>
<dbReference type="ComplexPortal" id="CPX-2589">
    <property type="entry name" value="Actin-related protein 2/3 complex, Arpc3B variant"/>
</dbReference>
<dbReference type="ComplexPortal" id="CPX-2739">
    <property type="entry name" value="Actin-related protein 2/3 complex, Arpc3A variant"/>
</dbReference>
<dbReference type="DIP" id="DIP-20563N"/>
<dbReference type="FunCoup" id="P32392">
    <property type="interactions" value="1549"/>
</dbReference>
<dbReference type="IntAct" id="P32392">
    <property type="interactions" value="17"/>
</dbReference>
<dbReference type="STRING" id="7227.FBpp0076460"/>
<dbReference type="PaxDb" id="7227-FBpp0076460"/>
<dbReference type="DNASU" id="38898"/>
<dbReference type="EnsemblMetazoa" id="FBtr0076737">
    <property type="protein sequence ID" value="FBpp0076460"/>
    <property type="gene ID" value="FBgn0262716"/>
</dbReference>
<dbReference type="EnsemblMetazoa" id="FBtr0334087">
    <property type="protein sequence ID" value="FBpp0306212"/>
    <property type="gene ID" value="FBgn0262716"/>
</dbReference>
<dbReference type="GeneID" id="38898"/>
<dbReference type="KEGG" id="dme:Dmel_CG7558"/>
<dbReference type="AGR" id="FB:FBgn0262716"/>
<dbReference type="CTD" id="38898"/>
<dbReference type="FlyBase" id="FBgn0262716">
    <property type="gene designation" value="Arp3"/>
</dbReference>
<dbReference type="VEuPathDB" id="VectorBase:FBgn0262716"/>
<dbReference type="eggNOG" id="KOG0678">
    <property type="taxonomic scope" value="Eukaryota"/>
</dbReference>
<dbReference type="GeneTree" id="ENSGT00940000155065"/>
<dbReference type="HOGENOM" id="CLU_027965_3_0_1"/>
<dbReference type="InParanoid" id="P32392"/>
<dbReference type="OMA" id="GIHYPIR"/>
<dbReference type="OrthoDB" id="421448at2759"/>
<dbReference type="PhylomeDB" id="P32392"/>
<dbReference type="Reactome" id="R-DME-2029482">
    <property type="pathway name" value="Regulation of actin dynamics for phagocytic cup formation"/>
</dbReference>
<dbReference type="Reactome" id="R-DME-3928662">
    <property type="pathway name" value="EPHB-mediated forward signaling"/>
</dbReference>
<dbReference type="Reactome" id="R-DME-5663213">
    <property type="pathway name" value="RHO GTPases Activate WASPs and WAVEs"/>
</dbReference>
<dbReference type="Reactome" id="R-DME-8856828">
    <property type="pathway name" value="Clathrin-mediated endocytosis"/>
</dbReference>
<dbReference type="BioGRID-ORCS" id="38898">
    <property type="hits" value="1 hit in 3 CRISPR screens"/>
</dbReference>
<dbReference type="GenomeRNAi" id="38898"/>
<dbReference type="PRO" id="PR:P32392"/>
<dbReference type="Proteomes" id="UP000000803">
    <property type="component" value="Chromosome 3L"/>
</dbReference>
<dbReference type="Bgee" id="FBgn0262716">
    <property type="expression patterns" value="Expressed in embryonic/larval hemocyte (Drosophila) and 175 other cell types or tissues"/>
</dbReference>
<dbReference type="GO" id="GO:0005885">
    <property type="term" value="C:Arp2/3 protein complex"/>
    <property type="evidence" value="ECO:0000250"/>
    <property type="project" value="FlyBase"/>
</dbReference>
<dbReference type="GO" id="GO:0005829">
    <property type="term" value="C:cytosol"/>
    <property type="evidence" value="ECO:0000314"/>
    <property type="project" value="FlyBase"/>
</dbReference>
<dbReference type="GO" id="GO:0030027">
    <property type="term" value="C:lamellipodium"/>
    <property type="evidence" value="ECO:0000314"/>
    <property type="project" value="FlyBase"/>
</dbReference>
<dbReference type="GO" id="GO:0005652">
    <property type="term" value="C:nuclear lamina"/>
    <property type="evidence" value="ECO:0000314"/>
    <property type="project" value="FlyBase"/>
</dbReference>
<dbReference type="GO" id="GO:0003779">
    <property type="term" value="F:actin binding"/>
    <property type="evidence" value="ECO:0007669"/>
    <property type="project" value="UniProtKB-KW"/>
</dbReference>
<dbReference type="GO" id="GO:0005524">
    <property type="term" value="F:ATP binding"/>
    <property type="evidence" value="ECO:0007669"/>
    <property type="project" value="UniProtKB-KW"/>
</dbReference>
<dbReference type="GO" id="GO:0005200">
    <property type="term" value="F:structural constituent of cytoskeleton"/>
    <property type="evidence" value="ECO:0000250"/>
    <property type="project" value="FlyBase"/>
</dbReference>
<dbReference type="GO" id="GO:0030036">
    <property type="term" value="P:actin cytoskeleton organization"/>
    <property type="evidence" value="ECO:0000315"/>
    <property type="project" value="FlyBase"/>
</dbReference>
<dbReference type="GO" id="GO:0034314">
    <property type="term" value="P:Arp2/3 complex-mediated actin nucleation"/>
    <property type="evidence" value="ECO:0000250"/>
    <property type="project" value="FlyBase"/>
</dbReference>
<dbReference type="GO" id="GO:0007413">
    <property type="term" value="P:axonal fasciculation"/>
    <property type="evidence" value="ECO:0000315"/>
    <property type="project" value="FlyBase"/>
</dbReference>
<dbReference type="GO" id="GO:0022416">
    <property type="term" value="P:chaeta development"/>
    <property type="evidence" value="ECO:0000315"/>
    <property type="project" value="FlyBase"/>
</dbReference>
<dbReference type="GO" id="GO:0006886">
    <property type="term" value="P:intracellular protein transport"/>
    <property type="evidence" value="ECO:0000315"/>
    <property type="project" value="FlyBase"/>
</dbReference>
<dbReference type="GO" id="GO:0030032">
    <property type="term" value="P:lamellipodium assembly"/>
    <property type="evidence" value="ECO:0000315"/>
    <property type="project" value="FlyBase"/>
</dbReference>
<dbReference type="GO" id="GO:0007520">
    <property type="term" value="P:myoblast fusion"/>
    <property type="evidence" value="ECO:0000315"/>
    <property type="project" value="FlyBase"/>
</dbReference>
<dbReference type="GO" id="GO:0140591">
    <property type="term" value="P:nuclear envelope budding"/>
    <property type="evidence" value="ECO:0000315"/>
    <property type="project" value="FlyBase"/>
</dbReference>
<dbReference type="GO" id="GO:0097320">
    <property type="term" value="P:plasma membrane tubulation"/>
    <property type="evidence" value="ECO:0000315"/>
    <property type="project" value="FlyBase"/>
</dbReference>
<dbReference type="GO" id="GO:0051491">
    <property type="term" value="P:positive regulation of filopodium assembly"/>
    <property type="evidence" value="ECO:0000315"/>
    <property type="project" value="FlyBase"/>
</dbReference>
<dbReference type="GO" id="GO:0010592">
    <property type="term" value="P:positive regulation of lamellipodium assembly"/>
    <property type="evidence" value="ECO:0000315"/>
    <property type="project" value="FlyBase"/>
</dbReference>
<dbReference type="GO" id="GO:0045887">
    <property type="term" value="P:positive regulation of synaptic assembly at neuromuscular junction"/>
    <property type="evidence" value="ECO:0000315"/>
    <property type="project" value="FlyBase"/>
</dbReference>
<dbReference type="GO" id="GO:0030589">
    <property type="term" value="P:pseudocleavage involved in syncytial blastoderm formation"/>
    <property type="evidence" value="ECO:0000353"/>
    <property type="project" value="FlyBase"/>
</dbReference>
<dbReference type="GO" id="GO:0072553">
    <property type="term" value="P:terminal button organization"/>
    <property type="evidence" value="ECO:0000315"/>
    <property type="project" value="FlyBase"/>
</dbReference>
<dbReference type="GO" id="GO:0035313">
    <property type="term" value="P:wound healing, spreading of epidermal cells"/>
    <property type="evidence" value="ECO:0000315"/>
    <property type="project" value="FlyBase"/>
</dbReference>
<dbReference type="CDD" id="cd10221">
    <property type="entry name" value="ASKHA_NBD_Arp3-like"/>
    <property type="match status" value="1"/>
</dbReference>
<dbReference type="FunFam" id="3.30.420.40:FF:000029">
    <property type="entry name" value="Actin-related protein 3"/>
    <property type="match status" value="1"/>
</dbReference>
<dbReference type="FunFam" id="3.30.420.40:FF:000315">
    <property type="entry name" value="Actin-related protein 3"/>
    <property type="match status" value="1"/>
</dbReference>
<dbReference type="FunFam" id="3.30.420.40:FF:000803">
    <property type="entry name" value="Actin-related protein 3"/>
    <property type="match status" value="1"/>
</dbReference>
<dbReference type="FunFam" id="3.90.640.10:FF:000006">
    <property type="entry name" value="Actin-related protein 3 (ARP3)"/>
    <property type="match status" value="1"/>
</dbReference>
<dbReference type="Gene3D" id="3.30.420.40">
    <property type="match status" value="2"/>
</dbReference>
<dbReference type="Gene3D" id="3.90.640.10">
    <property type="entry name" value="Actin, Chain A, domain 4"/>
    <property type="match status" value="1"/>
</dbReference>
<dbReference type="InterPro" id="IPR004000">
    <property type="entry name" value="Actin"/>
</dbReference>
<dbReference type="InterPro" id="IPR020902">
    <property type="entry name" value="Actin/actin-like_CS"/>
</dbReference>
<dbReference type="InterPro" id="IPR043129">
    <property type="entry name" value="ATPase_NBD"/>
</dbReference>
<dbReference type="PANTHER" id="PTHR11937">
    <property type="entry name" value="ACTIN"/>
    <property type="match status" value="1"/>
</dbReference>
<dbReference type="Pfam" id="PF00022">
    <property type="entry name" value="Actin"/>
    <property type="match status" value="1"/>
</dbReference>
<dbReference type="SMART" id="SM00268">
    <property type="entry name" value="ACTIN"/>
    <property type="match status" value="1"/>
</dbReference>
<dbReference type="SUPFAM" id="SSF53067">
    <property type="entry name" value="Actin-like ATPase domain"/>
    <property type="match status" value="2"/>
</dbReference>
<dbReference type="PROSITE" id="PS01132">
    <property type="entry name" value="ACTINS_ACT_LIKE"/>
    <property type="match status" value="1"/>
</dbReference>
<reference key="1">
    <citation type="journal article" date="1993" name="Biochem. Genet.">
        <title>A Drosophila homologue of the Schizosaccharomyces pombe act2 gene.</title>
        <authorList>
            <person name="Fyrberg C."/>
            <person name="Fyrberg E.A."/>
        </authorList>
    </citation>
    <scope>NUCLEOTIDE SEQUENCE [GENOMIC DNA]</scope>
</reference>
<reference key="2">
    <citation type="journal article" date="2000" name="Science">
        <title>The genome sequence of Drosophila melanogaster.</title>
        <authorList>
            <person name="Adams M.D."/>
            <person name="Celniker S.E."/>
            <person name="Holt R.A."/>
            <person name="Evans C.A."/>
            <person name="Gocayne J.D."/>
            <person name="Amanatides P.G."/>
            <person name="Scherer S.E."/>
            <person name="Li P.W."/>
            <person name="Hoskins R.A."/>
            <person name="Galle R.F."/>
            <person name="George R.A."/>
            <person name="Lewis S.E."/>
            <person name="Richards S."/>
            <person name="Ashburner M."/>
            <person name="Henderson S.N."/>
            <person name="Sutton G.G."/>
            <person name="Wortman J.R."/>
            <person name="Yandell M.D."/>
            <person name="Zhang Q."/>
            <person name="Chen L.X."/>
            <person name="Brandon R.C."/>
            <person name="Rogers Y.-H.C."/>
            <person name="Blazej R.G."/>
            <person name="Champe M."/>
            <person name="Pfeiffer B.D."/>
            <person name="Wan K.H."/>
            <person name="Doyle C."/>
            <person name="Baxter E.G."/>
            <person name="Helt G."/>
            <person name="Nelson C.R."/>
            <person name="Miklos G.L.G."/>
            <person name="Abril J.F."/>
            <person name="Agbayani A."/>
            <person name="An H.-J."/>
            <person name="Andrews-Pfannkoch C."/>
            <person name="Baldwin D."/>
            <person name="Ballew R.M."/>
            <person name="Basu A."/>
            <person name="Baxendale J."/>
            <person name="Bayraktaroglu L."/>
            <person name="Beasley E.M."/>
            <person name="Beeson K.Y."/>
            <person name="Benos P.V."/>
            <person name="Berman B.P."/>
            <person name="Bhandari D."/>
            <person name="Bolshakov S."/>
            <person name="Borkova D."/>
            <person name="Botchan M.R."/>
            <person name="Bouck J."/>
            <person name="Brokstein P."/>
            <person name="Brottier P."/>
            <person name="Burtis K.C."/>
            <person name="Busam D.A."/>
            <person name="Butler H."/>
            <person name="Cadieu E."/>
            <person name="Center A."/>
            <person name="Chandra I."/>
            <person name="Cherry J.M."/>
            <person name="Cawley S."/>
            <person name="Dahlke C."/>
            <person name="Davenport L.B."/>
            <person name="Davies P."/>
            <person name="de Pablos B."/>
            <person name="Delcher A."/>
            <person name="Deng Z."/>
            <person name="Mays A.D."/>
            <person name="Dew I."/>
            <person name="Dietz S.M."/>
            <person name="Dodson K."/>
            <person name="Doup L.E."/>
            <person name="Downes M."/>
            <person name="Dugan-Rocha S."/>
            <person name="Dunkov B.C."/>
            <person name="Dunn P."/>
            <person name="Durbin K.J."/>
            <person name="Evangelista C.C."/>
            <person name="Ferraz C."/>
            <person name="Ferriera S."/>
            <person name="Fleischmann W."/>
            <person name="Fosler C."/>
            <person name="Gabrielian A.E."/>
            <person name="Garg N.S."/>
            <person name="Gelbart W.M."/>
            <person name="Glasser K."/>
            <person name="Glodek A."/>
            <person name="Gong F."/>
            <person name="Gorrell J.H."/>
            <person name="Gu Z."/>
            <person name="Guan P."/>
            <person name="Harris M."/>
            <person name="Harris N.L."/>
            <person name="Harvey D.A."/>
            <person name="Heiman T.J."/>
            <person name="Hernandez J.R."/>
            <person name="Houck J."/>
            <person name="Hostin D."/>
            <person name="Houston K.A."/>
            <person name="Howland T.J."/>
            <person name="Wei M.-H."/>
            <person name="Ibegwam C."/>
            <person name="Jalali M."/>
            <person name="Kalush F."/>
            <person name="Karpen G.H."/>
            <person name="Ke Z."/>
            <person name="Kennison J.A."/>
            <person name="Ketchum K.A."/>
            <person name="Kimmel B.E."/>
            <person name="Kodira C.D."/>
            <person name="Kraft C.L."/>
            <person name="Kravitz S."/>
            <person name="Kulp D."/>
            <person name="Lai Z."/>
            <person name="Lasko P."/>
            <person name="Lei Y."/>
            <person name="Levitsky A.A."/>
            <person name="Li J.H."/>
            <person name="Li Z."/>
            <person name="Liang Y."/>
            <person name="Lin X."/>
            <person name="Liu X."/>
            <person name="Mattei B."/>
            <person name="McIntosh T.C."/>
            <person name="McLeod M.P."/>
            <person name="McPherson D."/>
            <person name="Merkulov G."/>
            <person name="Milshina N.V."/>
            <person name="Mobarry C."/>
            <person name="Morris J."/>
            <person name="Moshrefi A."/>
            <person name="Mount S.M."/>
            <person name="Moy M."/>
            <person name="Murphy B."/>
            <person name="Murphy L."/>
            <person name="Muzny D.M."/>
            <person name="Nelson D.L."/>
            <person name="Nelson D.R."/>
            <person name="Nelson K.A."/>
            <person name="Nixon K."/>
            <person name="Nusskern D.R."/>
            <person name="Pacleb J.M."/>
            <person name="Palazzolo M."/>
            <person name="Pittman G.S."/>
            <person name="Pan S."/>
            <person name="Pollard J."/>
            <person name="Puri V."/>
            <person name="Reese M.G."/>
            <person name="Reinert K."/>
            <person name="Remington K."/>
            <person name="Saunders R.D.C."/>
            <person name="Scheeler F."/>
            <person name="Shen H."/>
            <person name="Shue B.C."/>
            <person name="Siden-Kiamos I."/>
            <person name="Simpson M."/>
            <person name="Skupski M.P."/>
            <person name="Smith T.J."/>
            <person name="Spier E."/>
            <person name="Spradling A.C."/>
            <person name="Stapleton M."/>
            <person name="Strong R."/>
            <person name="Sun E."/>
            <person name="Svirskas R."/>
            <person name="Tector C."/>
            <person name="Turner R."/>
            <person name="Venter E."/>
            <person name="Wang A.H."/>
            <person name="Wang X."/>
            <person name="Wang Z.-Y."/>
            <person name="Wassarman D.A."/>
            <person name="Weinstock G.M."/>
            <person name="Weissenbach J."/>
            <person name="Williams S.M."/>
            <person name="Woodage T."/>
            <person name="Worley K.C."/>
            <person name="Wu D."/>
            <person name="Yang S."/>
            <person name="Yao Q.A."/>
            <person name="Ye J."/>
            <person name="Yeh R.-F."/>
            <person name="Zaveri J.S."/>
            <person name="Zhan M."/>
            <person name="Zhang G."/>
            <person name="Zhao Q."/>
            <person name="Zheng L."/>
            <person name="Zheng X.H."/>
            <person name="Zhong F.N."/>
            <person name="Zhong W."/>
            <person name="Zhou X."/>
            <person name="Zhu S.C."/>
            <person name="Zhu X."/>
            <person name="Smith H.O."/>
            <person name="Gibbs R.A."/>
            <person name="Myers E.W."/>
            <person name="Rubin G.M."/>
            <person name="Venter J.C."/>
        </authorList>
    </citation>
    <scope>NUCLEOTIDE SEQUENCE [LARGE SCALE GENOMIC DNA]</scope>
    <source>
        <strain>Berkeley</strain>
    </source>
</reference>
<reference key="3">
    <citation type="journal article" date="2002" name="Genome Biol.">
        <title>Annotation of the Drosophila melanogaster euchromatic genome: a systematic review.</title>
        <authorList>
            <person name="Misra S."/>
            <person name="Crosby M.A."/>
            <person name="Mungall C.J."/>
            <person name="Matthews B.B."/>
            <person name="Campbell K.S."/>
            <person name="Hradecky P."/>
            <person name="Huang Y."/>
            <person name="Kaminker J.S."/>
            <person name="Millburn G.H."/>
            <person name="Prochnik S.E."/>
            <person name="Smith C.D."/>
            <person name="Tupy J.L."/>
            <person name="Whitfield E.J."/>
            <person name="Bayraktaroglu L."/>
            <person name="Berman B.P."/>
            <person name="Bettencourt B.R."/>
            <person name="Celniker S.E."/>
            <person name="de Grey A.D.N.J."/>
            <person name="Drysdale R.A."/>
            <person name="Harris N.L."/>
            <person name="Richter J."/>
            <person name="Russo S."/>
            <person name="Schroeder A.J."/>
            <person name="Shu S.Q."/>
            <person name="Stapleton M."/>
            <person name="Yamada C."/>
            <person name="Ashburner M."/>
            <person name="Gelbart W.M."/>
            <person name="Rubin G.M."/>
            <person name="Lewis S.E."/>
        </authorList>
    </citation>
    <scope>GENOME REANNOTATION</scope>
    <source>
        <strain>Berkeley</strain>
    </source>
</reference>
<reference key="4">
    <citation type="journal article" date="2002" name="Genome Biol.">
        <title>A Drosophila full-length cDNA resource.</title>
        <authorList>
            <person name="Stapleton M."/>
            <person name="Carlson J.W."/>
            <person name="Brokstein P."/>
            <person name="Yu C."/>
            <person name="Champe M."/>
            <person name="George R.A."/>
            <person name="Guarin H."/>
            <person name="Kronmiller B."/>
            <person name="Pacleb J.M."/>
            <person name="Park S."/>
            <person name="Wan K.H."/>
            <person name="Rubin G.M."/>
            <person name="Celniker S.E."/>
        </authorList>
    </citation>
    <scope>NUCLEOTIDE SEQUENCE [LARGE SCALE MRNA]</scope>
    <source>
        <strain>Berkeley</strain>
        <tissue>Embryo</tissue>
    </source>
</reference>
<reference key="5">
    <citation type="journal article" date="2015" name="Mol. Biol. Cell">
        <title>Wash functions downstream of Rho1 GTPase in a subset of Drosophila immune cell developmental migrations.</title>
        <authorList>
            <person name="Verboon J.M."/>
            <person name="Rahe T.K."/>
            <person name="Rodriguez-Mesa E."/>
            <person name="Parkhurst S.M."/>
        </authorList>
    </citation>
    <scope>FUNCTION</scope>
</reference>
<feature type="chain" id="PRO_0000089087" description="Actin-related protein 3">
    <location>
        <begin position="1"/>
        <end position="418"/>
    </location>
</feature>
<feature type="sequence conflict" description="In Ref. 1; CAA50674." evidence="3" ref="1">
    <original>A</original>
    <variation>R</variation>
    <location>
        <position position="69"/>
    </location>
</feature>
<feature type="sequence conflict" description="In Ref. 1; CAA50674." evidence="3" ref="1">
    <original>H</original>
    <variation>D</variation>
    <location>
        <position position="176"/>
    </location>
</feature>
<feature type="sequence conflict" description="In Ref. 1; CAA50674." evidence="3" ref="1">
    <original>F</original>
    <variation>L</variation>
    <location>
        <position position="203"/>
    </location>
</feature>
<proteinExistence type="evidence at transcript level"/>
<gene>
    <name evidence="4" type="primary">Arp3</name>
    <name type="synonym">Actr66B</name>
    <name evidence="4" type="synonym">Arp66B</name>
    <name evidence="4" type="ORF">CG7558</name>
</gene>
<evidence type="ECO:0000250" key="1">
    <source>
        <dbReference type="UniProtKB" id="P61158"/>
    </source>
</evidence>
<evidence type="ECO:0000269" key="2">
    <source>
    </source>
</evidence>
<evidence type="ECO:0000305" key="3"/>
<evidence type="ECO:0000312" key="4">
    <source>
        <dbReference type="FlyBase" id="FBgn0262716"/>
    </source>
</evidence>
<name>ARP3_DROME</name>
<accession>P32392</accession>
<accession>M9PEY5</accession>
<accession>Q9VSD5</accession>
<keyword id="KW-0009">Actin-binding</keyword>
<keyword id="KW-0067">ATP-binding</keyword>
<keyword id="KW-0963">Cytoplasm</keyword>
<keyword id="KW-0206">Cytoskeleton</keyword>
<keyword id="KW-0547">Nucleotide-binding</keyword>
<keyword id="KW-1185">Reference proteome</keyword>
<sequence length="418" mass="47033">MAGRLPACVIDVGTGYSKLGFAGNKEPQFIIPSAIAIKESARVGDTNTRRITKGIEDLDFFIGDEAFDATGYSIKYPVRHGLVEDWDLMERFLEQCVFKYLRAEPEDHYFLLTEPPLNTPENREYTAEIMFETFNVPGLYIAVQAVLALAASWASRSAEERTLTGIVVDSGDGVTHVIPVAEGYVIGSCIKHIPIAGRNITSFIQSLLREREVGIPPEQSLETAKAIKEKHCYICPDIAKEFAKYDTEPGKWIRNFSGVNTVTKAPFNVDVGYERFLGPEIFFHPEFSNPDFTIPLSEIVDNVIQNCPIDVRRPLYNNIVLSGGSTMFKDFGRRLQRDIKRSVDTRLRISENLSEGRIKPKPIDVQVITHHMQRYAVWFGGSMLASTPEFYQVCHTKAAYEEYGPSICRHNPVFGTMT</sequence>
<comment type="function">
    <text evidence="1 2">Functions as ATP-binding component of the Arp2/3 complex which is involved in regulation of actin polymerization and together with an activating nucleation-promoting factor (NPF) mediates the formation of branched actin networks (By similarity). Seems to contact the pointed end of the daughter actin filament (By similarity). Required during embryogenesis for the developmental migration of tail hemocytes anteriorly, along the ventral midline (PubMed:25739458).</text>
</comment>
<comment type="subunit">
    <text evidence="1">Component of the Arp2/3 complex.</text>
</comment>
<comment type="subcellular location">
    <subcellularLocation>
        <location evidence="1">Cytoplasm</location>
        <location evidence="1">Cytoskeleton</location>
    </subcellularLocation>
</comment>
<comment type="similarity">
    <text evidence="3">Belongs to the actin family. ARP3 subfamily.</text>
</comment>